<organism>
    <name type="scientific">Conus striolatus</name>
    <name type="common">Cone snail</name>
    <dbReference type="NCBI Taxonomy" id="101315"/>
    <lineage>
        <taxon>Eukaryota</taxon>
        <taxon>Metazoa</taxon>
        <taxon>Spiralia</taxon>
        <taxon>Lophotrochozoa</taxon>
        <taxon>Mollusca</taxon>
        <taxon>Gastropoda</taxon>
        <taxon>Caenogastropoda</taxon>
        <taxon>Neogastropoda</taxon>
        <taxon>Conoidea</taxon>
        <taxon>Conidae</taxon>
        <taxon>Conus</taxon>
        <taxon>Pionoconus</taxon>
    </lineage>
</organism>
<reference key="1">
    <citation type="journal article" date="2008" name="J. Am. Chem. Soc.">
        <title>NMR-based mapping of disulfide bridges in cysteine-rich peptides: application to the mu-conotoxin SxIIIA.</title>
        <authorList>
            <person name="Walewska A."/>
            <person name="Skalicky J.J."/>
            <person name="Davis D.R."/>
            <person name="Zhang M.-M."/>
            <person name="Lopez-Vera E."/>
            <person name="Watkins M."/>
            <person name="Han T.S."/>
            <person name="Yoshikami D."/>
            <person name="Olivera B.M."/>
            <person name="Bulaj G."/>
        </authorList>
    </citation>
    <scope>NUCLEOTIDE SEQUENCE [MRNA]</scope>
    <scope>SYNTHESIS</scope>
    <scope>FUNCTION</scope>
    <scope>AMIDATION AT ALA-22</scope>
    <source>
        <tissue>Venom duct</tissue>
    </source>
</reference>
<reference key="2">
    <citation type="journal article" date="2011" name="Proc. Natl. Acad. Sci. U.S.A.">
        <title>mu-Conotoxins that differentially block sodium channels Nav1.1 through 1.8 identify those responsible for action potentials in sciatic nerve.</title>
        <authorList>
            <person name="Wilson M.J."/>
            <person name="Yoshikami D."/>
            <person name="Azam L."/>
            <person name="Gajewiak J."/>
            <person name="Olivera B.M."/>
            <person name="Bulaj G."/>
            <person name="Zhang M.M."/>
        </authorList>
    </citation>
    <scope>FUNCTION</scope>
    <scope>SYNTHESIS</scope>
</reference>
<reference key="3">
    <citation type="journal article" date="2015" name="J. Neurophysiol.">
        <title>Alpha- and beta-subunit composition of voltage-gated sodium channels investigated with mu-conotoxins and the recently discovered muO'section sign'-conotoxin GVIIJ.</title>
        <authorList>
            <person name="Wilson M.J."/>
            <person name="Zhang M.M."/>
            <person name="Gajewiak J."/>
            <person name="Azam L."/>
            <person name="Rivier J.E."/>
            <person name="Olivera B.M."/>
            <person name="Yoshikami D."/>
        </authorList>
    </citation>
    <scope>FUNCTION</scope>
    <scope>SYNTHESIS</scope>
</reference>
<evidence type="ECO:0000250" key="1">
    <source>
        <dbReference type="UniProtKB" id="P01523"/>
    </source>
</evidence>
<evidence type="ECO:0000269" key="2">
    <source>
    </source>
</evidence>
<evidence type="ECO:0000269" key="3">
    <source>
    </source>
</evidence>
<evidence type="ECO:0000269" key="4">
    <source>
    </source>
</evidence>
<evidence type="ECO:0000303" key="5">
    <source>
    </source>
</evidence>
<evidence type="ECO:0000305" key="6"/>
<evidence type="ECO:0000305" key="7">
    <source>
    </source>
</evidence>
<sequence length="22" mass="2278">RCCTGKKGSCSGRACKNLKCCA</sequence>
<keyword id="KW-0027">Amidation</keyword>
<keyword id="KW-1015">Disulfide bond</keyword>
<keyword id="KW-0872">Ion channel impairing toxin</keyword>
<keyword id="KW-0528">Neurotoxin</keyword>
<keyword id="KW-0964">Secreted</keyword>
<keyword id="KW-0800">Toxin</keyword>
<keyword id="KW-0738">Voltage-gated sodium channel impairing toxin</keyword>
<protein>
    <recommendedName>
        <fullName evidence="5">Mu-conotoxin SxIIIA</fullName>
    </recommendedName>
</protein>
<comment type="function">
    <text evidence="2 3">Mu-conotoxins block voltage-gated sodium channels (Nav). This synthetic toxin potently blocks rNav1.4/SCN4A (IC(50)= 7 nM). It also moderately blocks rNav1.1/SCN1A (IC(50)=370 nM), rNav1.2/SCN2A (IC(50)=1 uM), and mNav1.6/SCN6A (IC(50)=570 nM) (PubMed:18831583, PubMed:21652775). It is noteworthy that coexpression of subunits beta-2 or beta-4 (but not beta-1 or beta-3) decrease by more that 10-fold the binding potency of the toxin to rNav1.6 (PubMed:25632083). It is also noteworthy that the toxin is 50-fold more potent on mouse Nav1.6 than on rat Nav1.6 (PubMed:25632083). In vivo, when injected intraperitoneally or subcutaneously in mice, causes motor impairment, paralysis and death (PubMed:18831583).</text>
</comment>
<comment type="subcellular location">
    <subcellularLocation>
        <location evidence="7">Secreted</location>
    </subcellularLocation>
</comment>
<comment type="tissue specificity">
    <text evidence="7">Expressed by the venom duct.</text>
</comment>
<comment type="domain">
    <text evidence="6">The cysteine framework is III (CC-C-C-CC). Classified in the M-4 branch, since 4 residues stand between the fourth and the fifth cysteine residues.</text>
</comment>
<comment type="toxic dose">
    <text evidence="2">When injected intraperitoneally or subcutaneously in mice, this toxin causes motor impairment/paralysis and is lethal at doses as low as 0.6 nmol per mouse.</text>
</comment>
<comment type="miscellaneous">
    <text evidence="3 4">Negative results: does not inhibit rNav1.3/SCN3A, rNav1.5/SCN5A, rNav1.7/SCN9A and rNav1.8/SCN10A (PubMed:21652775, PubMed:25632083).</text>
</comment>
<comment type="similarity">
    <text evidence="6">Belongs to the conotoxin M superfamily.</text>
</comment>
<dbReference type="ConoServer" id="3584">
    <property type="toxin name" value="SxIIIA"/>
</dbReference>
<dbReference type="GO" id="GO:0005576">
    <property type="term" value="C:extracellular region"/>
    <property type="evidence" value="ECO:0007669"/>
    <property type="project" value="UniProtKB-SubCell"/>
</dbReference>
<dbReference type="GO" id="GO:0017080">
    <property type="term" value="F:sodium channel regulator activity"/>
    <property type="evidence" value="ECO:0007669"/>
    <property type="project" value="UniProtKB-KW"/>
</dbReference>
<dbReference type="GO" id="GO:0090729">
    <property type="term" value="F:toxin activity"/>
    <property type="evidence" value="ECO:0007669"/>
    <property type="project" value="UniProtKB-KW"/>
</dbReference>
<name>CM3A_CONSR</name>
<proteinExistence type="evidence at protein level"/>
<feature type="peptide" id="PRO_0000366072" description="Mu-conotoxin SxIIIA" evidence="7">
    <location>
        <begin position="1"/>
        <end position="22"/>
    </location>
</feature>
<feature type="modified residue" description="Alanine amide" evidence="7">
    <location>
        <position position="22"/>
    </location>
</feature>
<feature type="disulfide bond" evidence="1 7">
    <location>
        <begin position="2"/>
        <end position="15"/>
    </location>
</feature>
<feature type="disulfide bond" evidence="1 7">
    <location>
        <begin position="3"/>
        <end position="20"/>
    </location>
</feature>
<feature type="disulfide bond" evidence="1 7">
    <location>
        <begin position="10"/>
        <end position="21"/>
    </location>
</feature>
<accession>P0C8V2</accession>